<gene>
    <name evidence="3" type="primary">uba5</name>
</gene>
<feature type="chain" id="PRO_0000438781" description="Ubiquitin-like modifier-activating enzyme 5">
    <location>
        <begin position="1"/>
        <end position="398"/>
    </location>
</feature>
<feature type="region of interest" description="Linker" evidence="1">
    <location>
        <begin position="343"/>
        <end position="373"/>
    </location>
</feature>
<feature type="short sequence motif" description="UFM1-interacting sequence (UIS)" evidence="1">
    <location>
        <begin position="330"/>
        <end position="342"/>
    </location>
</feature>
<feature type="short sequence motif" description="UFC1-binding sequence (UFC)" evidence="1">
    <location>
        <begin position="383"/>
        <end position="398"/>
    </location>
</feature>
<feature type="active site" description="Glycyl thioester intermediate" evidence="1">
    <location>
        <position position="246"/>
    </location>
</feature>
<feature type="binding site" evidence="1">
    <location>
        <position position="79"/>
    </location>
    <ligand>
        <name>ATP</name>
        <dbReference type="ChEBI" id="CHEBI:30616"/>
    </ligand>
</feature>
<feature type="binding site" evidence="1">
    <location>
        <position position="100"/>
    </location>
    <ligand>
        <name>ATP</name>
        <dbReference type="ChEBI" id="CHEBI:30616"/>
    </ligand>
</feature>
<feature type="binding site" evidence="1">
    <location>
        <position position="123"/>
    </location>
    <ligand>
        <name>ATP</name>
        <dbReference type="ChEBI" id="CHEBI:30616"/>
    </ligand>
</feature>
<feature type="binding site" evidence="1">
    <location>
        <position position="146"/>
    </location>
    <ligand>
        <name>ATP</name>
        <dbReference type="ChEBI" id="CHEBI:30616"/>
    </ligand>
</feature>
<feature type="binding site" evidence="1">
    <location>
        <position position="180"/>
    </location>
    <ligand>
        <name>ATP</name>
        <dbReference type="ChEBI" id="CHEBI:30616"/>
    </ligand>
</feature>
<feature type="binding site" evidence="1">
    <location>
        <position position="222"/>
    </location>
    <ligand>
        <name>Zn(2+)</name>
        <dbReference type="ChEBI" id="CHEBI:29105"/>
    </ligand>
</feature>
<feature type="binding site" evidence="1">
    <location>
        <position position="225"/>
    </location>
    <ligand>
        <name>Zn(2+)</name>
        <dbReference type="ChEBI" id="CHEBI:29105"/>
    </ligand>
</feature>
<feature type="binding site" evidence="1">
    <location>
        <position position="299"/>
    </location>
    <ligand>
        <name>Zn(2+)</name>
        <dbReference type="ChEBI" id="CHEBI:29105"/>
    </ligand>
</feature>
<feature type="binding site" evidence="1">
    <location>
        <position position="304"/>
    </location>
    <ligand>
        <name>Zn(2+)</name>
        <dbReference type="ChEBI" id="CHEBI:29105"/>
    </ligand>
</feature>
<keyword id="KW-0067">ATP-binding</keyword>
<keyword id="KW-0963">Cytoplasm</keyword>
<keyword id="KW-0256">Endoplasmic reticulum</keyword>
<keyword id="KW-0333">Golgi apparatus</keyword>
<keyword id="KW-0472">Membrane</keyword>
<keyword id="KW-0479">Metal-binding</keyword>
<keyword id="KW-0547">Nucleotide-binding</keyword>
<keyword id="KW-0539">Nucleus</keyword>
<keyword id="KW-1185">Reference proteome</keyword>
<keyword id="KW-0833">Ubl conjugation pathway</keyword>
<keyword id="KW-0862">Zinc</keyword>
<dbReference type="EMBL" id="CR381660">
    <property type="status" value="NOT_ANNOTATED_CDS"/>
    <property type="molecule type" value="Genomic_DNA"/>
</dbReference>
<dbReference type="SMR" id="X1WER2"/>
<dbReference type="FunCoup" id="X1WER2">
    <property type="interactions" value="1836"/>
</dbReference>
<dbReference type="STRING" id="7955.ENSDARP00000087478"/>
<dbReference type="PaxDb" id="7955-ENSDARP00000128713"/>
<dbReference type="eggNOG" id="KOG2336">
    <property type="taxonomic scope" value="Eukaryota"/>
</dbReference>
<dbReference type="HOGENOM" id="CLU_013325_0_1_1"/>
<dbReference type="InParanoid" id="X1WER2"/>
<dbReference type="Reactome" id="R-DRE-983168">
    <property type="pathway name" value="Antigen processing: Ubiquitination &amp; Proteasome degradation"/>
</dbReference>
<dbReference type="PRO" id="PR:X1WER2"/>
<dbReference type="Proteomes" id="UP000000437">
    <property type="component" value="Unplaced"/>
</dbReference>
<dbReference type="GO" id="GO:0005789">
    <property type="term" value="C:endoplasmic reticulum membrane"/>
    <property type="evidence" value="ECO:0000250"/>
    <property type="project" value="UniProtKB"/>
</dbReference>
<dbReference type="GO" id="GO:0005794">
    <property type="term" value="C:Golgi apparatus"/>
    <property type="evidence" value="ECO:0007669"/>
    <property type="project" value="UniProtKB-SubCell"/>
</dbReference>
<dbReference type="GO" id="GO:0005634">
    <property type="term" value="C:nucleus"/>
    <property type="evidence" value="ECO:0007669"/>
    <property type="project" value="UniProtKB-SubCell"/>
</dbReference>
<dbReference type="GO" id="GO:0005524">
    <property type="term" value="F:ATP binding"/>
    <property type="evidence" value="ECO:0007669"/>
    <property type="project" value="UniProtKB-KW"/>
</dbReference>
<dbReference type="GO" id="GO:0042803">
    <property type="term" value="F:protein homodimerization activity"/>
    <property type="evidence" value="ECO:0000250"/>
    <property type="project" value="UniProtKB"/>
</dbReference>
<dbReference type="GO" id="GO:0071566">
    <property type="term" value="F:UFM1 activating enzyme activity"/>
    <property type="evidence" value="ECO:0000250"/>
    <property type="project" value="UniProtKB"/>
</dbReference>
<dbReference type="GO" id="GO:0008270">
    <property type="term" value="F:zinc ion binding"/>
    <property type="evidence" value="ECO:0000250"/>
    <property type="project" value="UniProtKB"/>
</dbReference>
<dbReference type="GO" id="GO:0030218">
    <property type="term" value="P:erythrocyte differentiation"/>
    <property type="evidence" value="ECO:0000250"/>
    <property type="project" value="UniProtKB"/>
</dbReference>
<dbReference type="GO" id="GO:0040011">
    <property type="term" value="P:locomotion"/>
    <property type="evidence" value="ECO:0000315"/>
    <property type="project" value="UniProtKB"/>
</dbReference>
<dbReference type="GO" id="GO:0030219">
    <property type="term" value="P:megakaryocyte differentiation"/>
    <property type="evidence" value="ECO:0000250"/>
    <property type="project" value="UniProtKB"/>
</dbReference>
<dbReference type="GO" id="GO:0071569">
    <property type="term" value="P:protein ufmylation"/>
    <property type="evidence" value="ECO:0000250"/>
    <property type="project" value="UniProtKB"/>
</dbReference>
<dbReference type="GO" id="GO:0034976">
    <property type="term" value="P:response to endoplasmic reticulum stress"/>
    <property type="evidence" value="ECO:0000250"/>
    <property type="project" value="UniProtKB"/>
</dbReference>
<dbReference type="GO" id="GO:0061709">
    <property type="term" value="P:reticulophagy"/>
    <property type="evidence" value="ECO:0000250"/>
    <property type="project" value="UniProtKB"/>
</dbReference>
<dbReference type="CDD" id="cd00757">
    <property type="entry name" value="ThiF_MoeB_HesA_family"/>
    <property type="match status" value="1"/>
</dbReference>
<dbReference type="FunFam" id="3.40.50.720:FF:000066">
    <property type="entry name" value="Putative ubiquitin-like modifier-activating enzyme 5"/>
    <property type="match status" value="1"/>
</dbReference>
<dbReference type="Gene3D" id="3.40.50.720">
    <property type="entry name" value="NAD(P)-binding Rossmann-like Domain"/>
    <property type="match status" value="1"/>
</dbReference>
<dbReference type="InterPro" id="IPR029752">
    <property type="entry name" value="D-isomer_DH_CS1"/>
</dbReference>
<dbReference type="InterPro" id="IPR045886">
    <property type="entry name" value="ThiF/MoeB/HesA"/>
</dbReference>
<dbReference type="InterPro" id="IPR000594">
    <property type="entry name" value="ThiF_NAD_FAD-bd"/>
</dbReference>
<dbReference type="InterPro" id="IPR035985">
    <property type="entry name" value="Ubiquitin-activating_enz"/>
</dbReference>
<dbReference type="PANTHER" id="PTHR10953">
    <property type="entry name" value="UBIQUITIN-ACTIVATING ENZYME E1"/>
    <property type="match status" value="1"/>
</dbReference>
<dbReference type="PANTHER" id="PTHR10953:SF9">
    <property type="entry name" value="UBIQUITIN-LIKE MODIFIER-ACTIVATING ENZYME 5"/>
    <property type="match status" value="1"/>
</dbReference>
<dbReference type="Pfam" id="PF00899">
    <property type="entry name" value="ThiF"/>
    <property type="match status" value="1"/>
</dbReference>
<dbReference type="SUPFAM" id="SSF69572">
    <property type="entry name" value="Activating enzymes of the ubiquitin-like proteins"/>
    <property type="match status" value="1"/>
</dbReference>
<dbReference type="PROSITE" id="PS00065">
    <property type="entry name" value="D_2_HYDROXYACID_DH_1"/>
    <property type="match status" value="1"/>
</dbReference>
<evidence type="ECO:0000250" key="1">
    <source>
        <dbReference type="UniProtKB" id="Q9GZZ9"/>
    </source>
</evidence>
<evidence type="ECO:0000269" key="2">
    <source>
    </source>
</evidence>
<evidence type="ECO:0000303" key="3">
    <source>
    </source>
</evidence>
<evidence type="ECO:0000305" key="4"/>
<proteinExistence type="inferred from homology"/>
<protein>
    <recommendedName>
        <fullName evidence="4">Ubiquitin-like modifier-activating enzyme 5</fullName>
        <shortName evidence="3">Ubiquitin-activating enzyme 5</shortName>
    </recommendedName>
    <alternativeName>
        <fullName evidence="4">UFM1-activating enzyme</fullName>
    </alternativeName>
</protein>
<accession>X1WER2</accession>
<organism>
    <name type="scientific">Danio rerio</name>
    <name type="common">Zebrafish</name>
    <name type="synonym">Brachydanio rerio</name>
    <dbReference type="NCBI Taxonomy" id="7955"/>
    <lineage>
        <taxon>Eukaryota</taxon>
        <taxon>Metazoa</taxon>
        <taxon>Chordata</taxon>
        <taxon>Craniata</taxon>
        <taxon>Vertebrata</taxon>
        <taxon>Euteleostomi</taxon>
        <taxon>Actinopterygii</taxon>
        <taxon>Neopterygii</taxon>
        <taxon>Teleostei</taxon>
        <taxon>Ostariophysi</taxon>
        <taxon>Cypriniformes</taxon>
        <taxon>Danionidae</taxon>
        <taxon>Danioninae</taxon>
        <taxon>Danio</taxon>
    </lineage>
</organism>
<sequence length="398" mass="44234">MATVEELKLRIRELENELIKSKQKQSDAEHNIRPKIEQMSAEVVDSNPYSRLMALKRMGIVQDYEKIRSFAVAVVGVGGVGSVTAEMLTRCGIGKLLLFDYDKVELANMNRLFFQPHQAGLSKVEAAQHTLRNINPDVAFETHNYNITTMDNFTHFMDRVSHGGLEEGKPVDLILSCVDNFEARMAINTACNELGQIWMESGVSENAVSGHIQLIIPGETACFACAPPLVVAANIDEKTLKRDGVCAASLPTTMGVVAGLLVQNVLKYLLGFGTVSYYLGYNAMQDFFPSMAMKANPQCDDRHCRRQQDEYKKKEAERPKQEVVQEEEEVVHEDNEWGIELVSEVTEAELQDASGPIPDLPEGITVAYTIPEKDGGSGETVEETEQSLEELMAQMKKI</sequence>
<name>UBA5_DANRE</name>
<reference key="1">
    <citation type="journal article" date="2013" name="Nature">
        <title>The zebrafish reference genome sequence and its relationship to the human genome.</title>
        <authorList>
            <person name="Howe K."/>
            <person name="Clark M.D."/>
            <person name="Torroja C.F."/>
            <person name="Torrance J."/>
            <person name="Berthelot C."/>
            <person name="Muffato M."/>
            <person name="Collins J.E."/>
            <person name="Humphray S."/>
            <person name="McLaren K."/>
            <person name="Matthews L."/>
            <person name="McLaren S."/>
            <person name="Sealy I."/>
            <person name="Caccamo M."/>
            <person name="Churcher C."/>
            <person name="Scott C."/>
            <person name="Barrett J.C."/>
            <person name="Koch R."/>
            <person name="Rauch G.J."/>
            <person name="White S."/>
            <person name="Chow W."/>
            <person name="Kilian B."/>
            <person name="Quintais L.T."/>
            <person name="Guerra-Assuncao J.A."/>
            <person name="Zhou Y."/>
            <person name="Gu Y."/>
            <person name="Yen J."/>
            <person name="Vogel J.H."/>
            <person name="Eyre T."/>
            <person name="Redmond S."/>
            <person name="Banerjee R."/>
            <person name="Chi J."/>
            <person name="Fu B."/>
            <person name="Langley E."/>
            <person name="Maguire S.F."/>
            <person name="Laird G.K."/>
            <person name="Lloyd D."/>
            <person name="Kenyon E."/>
            <person name="Donaldson S."/>
            <person name="Sehra H."/>
            <person name="Almeida-King J."/>
            <person name="Loveland J."/>
            <person name="Trevanion S."/>
            <person name="Jones M."/>
            <person name="Quail M."/>
            <person name="Willey D."/>
            <person name="Hunt A."/>
            <person name="Burton J."/>
            <person name="Sims S."/>
            <person name="McLay K."/>
            <person name="Plumb B."/>
            <person name="Davis J."/>
            <person name="Clee C."/>
            <person name="Oliver K."/>
            <person name="Clark R."/>
            <person name="Riddle C."/>
            <person name="Elliot D."/>
            <person name="Threadgold G."/>
            <person name="Harden G."/>
            <person name="Ware D."/>
            <person name="Begum S."/>
            <person name="Mortimore B."/>
            <person name="Kerry G."/>
            <person name="Heath P."/>
            <person name="Phillimore B."/>
            <person name="Tracey A."/>
            <person name="Corby N."/>
            <person name="Dunn M."/>
            <person name="Johnson C."/>
            <person name="Wood J."/>
            <person name="Clark S."/>
            <person name="Pelan S."/>
            <person name="Griffiths G."/>
            <person name="Smith M."/>
            <person name="Glithero R."/>
            <person name="Howden P."/>
            <person name="Barker N."/>
            <person name="Lloyd C."/>
            <person name="Stevens C."/>
            <person name="Harley J."/>
            <person name="Holt K."/>
            <person name="Panagiotidis G."/>
            <person name="Lovell J."/>
            <person name="Beasley H."/>
            <person name="Henderson C."/>
            <person name="Gordon D."/>
            <person name="Auger K."/>
            <person name="Wright D."/>
            <person name="Collins J."/>
            <person name="Raisen C."/>
            <person name="Dyer L."/>
            <person name="Leung K."/>
            <person name="Robertson L."/>
            <person name="Ambridge K."/>
            <person name="Leongamornlert D."/>
            <person name="McGuire S."/>
            <person name="Gilderthorp R."/>
            <person name="Griffiths C."/>
            <person name="Manthravadi D."/>
            <person name="Nichol S."/>
            <person name="Barker G."/>
            <person name="Whitehead S."/>
            <person name="Kay M."/>
            <person name="Brown J."/>
            <person name="Murnane C."/>
            <person name="Gray E."/>
            <person name="Humphries M."/>
            <person name="Sycamore N."/>
            <person name="Barker D."/>
            <person name="Saunders D."/>
            <person name="Wallis J."/>
            <person name="Babbage A."/>
            <person name="Hammond S."/>
            <person name="Mashreghi-Mohammadi M."/>
            <person name="Barr L."/>
            <person name="Martin S."/>
            <person name="Wray P."/>
            <person name="Ellington A."/>
            <person name="Matthews N."/>
            <person name="Ellwood M."/>
            <person name="Woodmansey R."/>
            <person name="Clark G."/>
            <person name="Cooper J."/>
            <person name="Tromans A."/>
            <person name="Grafham D."/>
            <person name="Skuce C."/>
            <person name="Pandian R."/>
            <person name="Andrews R."/>
            <person name="Harrison E."/>
            <person name="Kimberley A."/>
            <person name="Garnett J."/>
            <person name="Fosker N."/>
            <person name="Hall R."/>
            <person name="Garner P."/>
            <person name="Kelly D."/>
            <person name="Bird C."/>
            <person name="Palmer S."/>
            <person name="Gehring I."/>
            <person name="Berger A."/>
            <person name="Dooley C.M."/>
            <person name="Ersan-Urun Z."/>
            <person name="Eser C."/>
            <person name="Geiger H."/>
            <person name="Geisler M."/>
            <person name="Karotki L."/>
            <person name="Kirn A."/>
            <person name="Konantz J."/>
            <person name="Konantz M."/>
            <person name="Oberlander M."/>
            <person name="Rudolph-Geiger S."/>
            <person name="Teucke M."/>
            <person name="Lanz C."/>
            <person name="Raddatz G."/>
            <person name="Osoegawa K."/>
            <person name="Zhu B."/>
            <person name="Rapp A."/>
            <person name="Widaa S."/>
            <person name="Langford C."/>
            <person name="Yang F."/>
            <person name="Schuster S.C."/>
            <person name="Carter N.P."/>
            <person name="Harrow J."/>
            <person name="Ning Z."/>
            <person name="Herrero J."/>
            <person name="Searle S.M."/>
            <person name="Enright A."/>
            <person name="Geisler R."/>
            <person name="Plasterk R.H."/>
            <person name="Lee C."/>
            <person name="Westerfield M."/>
            <person name="de Jong P.J."/>
            <person name="Zon L.I."/>
            <person name="Postlethwait J.H."/>
            <person name="Nusslein-Volhard C."/>
            <person name="Hubbard T.J."/>
            <person name="Roest Crollius H."/>
            <person name="Rogers J."/>
            <person name="Stemple D.L."/>
        </authorList>
    </citation>
    <scope>NUCLEOTIDE SEQUENCE [LARGE SCALE GENOMIC DNA]</scope>
    <source>
        <strain>Tuebingen</strain>
    </source>
</reference>
<reference key="2">
    <citation type="journal article" date="2016" name="Am. J. Hum. Genet.">
        <title>Biallelic variants in UBA5 reveal that disruption of the UFM1 cascade can result in early-onset encephalopathy.</title>
        <authorList>
            <consortium name="FREX Consortium"/>
            <person name="Colin E."/>
            <person name="Daniel J."/>
            <person name="Ziegler A."/>
            <person name="Wakim J."/>
            <person name="Scrivo A."/>
            <person name="Haack T.B."/>
            <person name="Khiati S."/>
            <person name="Denomme A.S."/>
            <person name="Amati-Bonneau P."/>
            <person name="Charif M."/>
            <person name="Procaccio V."/>
            <person name="Reynier P."/>
            <person name="Aleck K.A."/>
            <person name="Botto L.D."/>
            <person name="Herper C.L."/>
            <person name="Kaiser C.S."/>
            <person name="Nabbout R."/>
            <person name="N'Guyen S."/>
            <person name="Mora-Lorca J.A."/>
            <person name="Assmann B."/>
            <person name="Christ S."/>
            <person name="Meitinger T."/>
            <person name="Strom T.M."/>
            <person name="Prokisch H."/>
            <person name="Miranda-Vizuete A."/>
            <person name="Hoffmann G.F."/>
            <person name="Lenaers G."/>
            <person name="Bomont P."/>
            <person name="Liebau E."/>
            <person name="Bonneau D."/>
        </authorList>
    </citation>
    <scope>DISRUPTION PHENOTYPE</scope>
</reference>
<comment type="function">
    <text evidence="1">E1-like enzyme which specifically catalyzes the first step in ufmylation. Activates ufm1 by first adenylating its C-terminal glycine residue with ATP, and thereafter linking this residue to the side chain of a cysteine residue in E1, yielding a ufm1-E1 thioester and free AMP. Activates ufm1 via a trans-binding mechanism, in which ufm1 interacts with distinct sites in both subunits of the uba5 homodimer. Trans-binding also promotes stabilization of the uba5 homodimer, and enhances ATP-binding. Transfer of ufm1 from uba5 to the E2-like enzyme UFC1 also takes place using a trans mechanism. Ufmylation plays a key role in various processes, such as ribosome recycling, response to DNA damage, interferon response or reticulophagy (also called ER-phagy).</text>
</comment>
<comment type="subunit">
    <text evidence="1">Homodimer; homodimerization is required for ufm1 activation. Interacts (via UIS motif) with ufm1; binds ufm1 via a trans-binding mechanism in which ufm1 interacts with distinct sites in both subunits of the uba5 homodimer. Interacts (via C-terminus) with ufc1.</text>
</comment>
<comment type="subcellular location">
    <subcellularLocation>
        <location evidence="1">Cytoplasm</location>
    </subcellularLocation>
    <subcellularLocation>
        <location evidence="1">Nucleus</location>
    </subcellularLocation>
    <subcellularLocation>
        <location evidence="1">Endoplasmic reticulum membrane</location>
    </subcellularLocation>
    <subcellularLocation>
        <location evidence="1">Golgi apparatus</location>
    </subcellularLocation>
</comment>
<comment type="domain">
    <text evidence="1">The UFC1-binding sequence (UFC) motif mediates interaction with UFC1.</text>
</comment>
<comment type="domain">
    <text evidence="1">The linker region is required to activate the active site of UFC1: it region moves next to active site of UFC1 to reduce the amount of water molecules in the vicinity of UFC1's active site and thereby elevate the nucleophilic activity of UFC1 active site.</text>
</comment>
<comment type="domain">
    <text evidence="1">The UFM1-interacting sequence (UIS) motif mediates interaction with both UFM1 and LC3/GABARAP proteins (GABARAP, GABARAPL1 and GABARAPL2).</text>
</comment>
<comment type="disruption phenotype">
    <text evidence="2">Morpholino knockdown results in seizure-like behavior and decreases locomotor function (PubMed:27545681).</text>
</comment>
<comment type="similarity">
    <text evidence="4">Belongs to the ubiquitin-activating E1 family. UBA5 subfamily.</text>
</comment>